<protein>
    <recommendedName>
        <fullName evidence="5">Cardiotoxin-like basic polypeptide ah</fullName>
        <shortName evidence="5">CLBPah</shortName>
    </recommendedName>
</protein>
<dbReference type="GO" id="GO:0005576">
    <property type="term" value="C:extracellular region"/>
    <property type="evidence" value="ECO:0007669"/>
    <property type="project" value="UniProtKB-SubCell"/>
</dbReference>
<dbReference type="GO" id="GO:0016020">
    <property type="term" value="C:membrane"/>
    <property type="evidence" value="ECO:0007669"/>
    <property type="project" value="UniProtKB-KW"/>
</dbReference>
<dbReference type="GO" id="GO:0044218">
    <property type="term" value="C:other organism cell membrane"/>
    <property type="evidence" value="ECO:0007669"/>
    <property type="project" value="UniProtKB-KW"/>
</dbReference>
<dbReference type="GO" id="GO:0090729">
    <property type="term" value="F:toxin activity"/>
    <property type="evidence" value="ECO:0007669"/>
    <property type="project" value="UniProtKB-KW"/>
</dbReference>
<accession>P0C547</accession>
<proteinExistence type="evidence at protein level"/>
<name>3SOFH_NAJAT</name>
<organism>
    <name type="scientific">Naja atra</name>
    <name type="common">Chinese cobra</name>
    <dbReference type="NCBI Taxonomy" id="8656"/>
    <lineage>
        <taxon>Eukaryota</taxon>
        <taxon>Metazoa</taxon>
        <taxon>Chordata</taxon>
        <taxon>Craniata</taxon>
        <taxon>Vertebrata</taxon>
        <taxon>Euteleostomi</taxon>
        <taxon>Lepidosauria</taxon>
        <taxon>Squamata</taxon>
        <taxon>Bifurcata</taxon>
        <taxon>Unidentata</taxon>
        <taxon>Episquamata</taxon>
        <taxon>Toxicofera</taxon>
        <taxon>Serpentes</taxon>
        <taxon>Colubroidea</taxon>
        <taxon>Elapidae</taxon>
        <taxon>Elapinae</taxon>
        <taxon>Naja</taxon>
    </lineage>
</organism>
<reference key="1">
    <citation type="journal article" date="2007" name="Acta Crystallogr. F">
        <title>Purification, partial characterization, crystallization and preliminary X-ray diffraction of a novel cardiotoxin-like basic protein from Naja naja atra (South Anhui) venom.</title>
        <authorList>
            <person name="Rong H."/>
            <person name="Li Y."/>
            <person name="Lou X.-H."/>
            <person name="Zhang X."/>
            <person name="Gao Y.-X."/>
            <person name="Teng M.-K."/>
            <person name="Niu L.-W."/>
        </authorList>
    </citation>
    <scope>PROTEIN SEQUENCE</scope>
    <scope>FUNCTION</scope>
    <scope>SUBCELLULAR LOCATION</scope>
    <scope>MASS SPECTROMETRY</scope>
    <scope>TOXIC DOSE</scope>
    <scope>CRYSTALLIZATION</scope>
    <source>
        <tissue>Venom</tissue>
    </source>
</reference>
<feature type="chain" id="PRO_0000292041" description="Cardiotoxin-like basic polypeptide ah" evidence="4">
    <location>
        <begin position="1"/>
        <end position="21" status="greater than"/>
    </location>
</feature>
<feature type="non-terminal residue">
    <location>
        <position position="21"/>
    </location>
</feature>
<keyword id="KW-0903">Direct protein sequencing</keyword>
<keyword id="KW-1015">Disulfide bond</keyword>
<keyword id="KW-0472">Membrane</keyword>
<keyword id="KW-0964">Secreted</keyword>
<keyword id="KW-1052">Target cell membrane</keyword>
<keyword id="KW-1053">Target membrane</keyword>
<keyword id="KW-0800">Toxin</keyword>
<evidence type="ECO:0000250" key="1">
    <source>
        <dbReference type="UniProtKB" id="P14541"/>
    </source>
</evidence>
<evidence type="ECO:0000250" key="2">
    <source>
        <dbReference type="UniProtKB" id="P60301"/>
    </source>
</evidence>
<evidence type="ECO:0000250" key="3">
    <source>
        <dbReference type="UniProtKB" id="P62375"/>
    </source>
</evidence>
<evidence type="ECO:0000269" key="4">
    <source>
    </source>
</evidence>
<evidence type="ECO:0000303" key="5">
    <source>
    </source>
</evidence>
<evidence type="ECO:0000305" key="6"/>
<comment type="function">
    <text evidence="1 4">Has hemolytic activity under low-lecithin conditions (PubMed:17277458). Has low cytotoxic activity (By similarity). Inhibits the expression of VEGF and bFGF in human non-small-cell lung cancer cell line NCI-H1299 in a dose-dependent manner (PubMed:17277458).</text>
</comment>
<comment type="subcellular location">
    <subcellularLocation>
        <location evidence="4">Secreted</location>
    </subcellularLocation>
    <subcellularLocation>
        <location evidence="3">Target cell membrane</location>
    </subcellularLocation>
</comment>
<comment type="tissue specificity">
    <text evidence="6">Expressed by the venom gland.</text>
</comment>
<comment type="PTM">
    <text evidence="2">Contains 4 disulfide bonds.</text>
</comment>
<comment type="mass spectrometry"/>
<comment type="toxic dose">
    <text evidence="4">LD(50) is 9.7 mg/kg by intravenous injection into mice.</text>
</comment>
<comment type="miscellaneous">
    <text evidence="6">Is classified as a P-type cytotoxin, since homologs have a proline residue at position 31.</text>
</comment>
<comment type="similarity">
    <text evidence="6">Belongs to the three-finger toxin family. Short-chain subfamily. Orphan group XV sub-subfamily.</text>
</comment>
<sequence>DCCHNTQLPFIYKTCPEGCNL</sequence>